<feature type="chain" id="PRO_0000100287" description="Cold shock-like protein CspC">
    <location>
        <begin position="1"/>
        <end position="65"/>
    </location>
</feature>
<feature type="domain" description="CSD">
    <location>
        <begin position="3"/>
        <end position="62"/>
    </location>
</feature>
<accession>P62171</accession>
<accession>Q45098</accession>
<keyword id="KW-0010">Activator</keyword>
<keyword id="KW-0963">Cytoplasm</keyword>
<keyword id="KW-0238">DNA-binding</keyword>
<keyword id="KW-1185">Reference proteome</keyword>
<keyword id="KW-0804">Transcription</keyword>
<keyword id="KW-0805">Transcription regulation</keyword>
<sequence>MQGRVKWFNAEKGFGFIEREDGDDVFVHFSAIQQDGYKSLEEGQQVEFDIVDGARGPQAANVVKL</sequence>
<proteinExistence type="inferred from homology"/>
<evidence type="ECO:0000250" key="1"/>
<evidence type="ECO:0000305" key="2"/>
<protein>
    <recommendedName>
        <fullName>Cold shock-like protein CspC</fullName>
    </recommendedName>
</protein>
<comment type="subunit">
    <text evidence="2">Homodimer.</text>
</comment>
<comment type="subcellular location">
    <subcellularLocation>
        <location evidence="1">Cytoplasm</location>
    </subcellularLocation>
</comment>
<comment type="sequence caution" evidence="2">
    <conflict type="erroneous initiation">
        <sequence resource="EMBL-CDS" id="AAP12056"/>
    </conflict>
</comment>
<reference key="1">
    <citation type="journal article" date="2003" name="Nature">
        <title>Genome sequence of Bacillus cereus and comparative analysis with Bacillus anthracis.</title>
        <authorList>
            <person name="Ivanova N."/>
            <person name="Sorokin A."/>
            <person name="Anderson I."/>
            <person name="Galleron N."/>
            <person name="Candelon B."/>
            <person name="Kapatral V."/>
            <person name="Bhattacharyya A."/>
            <person name="Reznik G."/>
            <person name="Mikhailova N."/>
            <person name="Lapidus A."/>
            <person name="Chu L."/>
            <person name="Mazur M."/>
            <person name="Goltsman E."/>
            <person name="Larsen N."/>
            <person name="D'Souza M."/>
            <person name="Walunas T."/>
            <person name="Grechkin Y."/>
            <person name="Pusch G."/>
            <person name="Haselkorn R."/>
            <person name="Fonstein M."/>
            <person name="Ehrlich S.D."/>
            <person name="Overbeek R."/>
            <person name="Kyrpides N.C."/>
        </authorList>
    </citation>
    <scope>NUCLEOTIDE SEQUENCE [LARGE SCALE GENOMIC DNA]</scope>
    <source>
        <strain>ATCC 14579 / DSM 31 / CCUG 7414 / JCM 2152 / NBRC 15305 / NCIMB 9373 / NCTC 2599 / NRRL B-3711</strain>
    </source>
</reference>
<gene>
    <name type="primary">cspC</name>
    <name type="ordered locus">BC_5191</name>
</gene>
<name>CSPC_BACCR</name>
<dbReference type="EMBL" id="AE016877">
    <property type="protein sequence ID" value="AAP12056.1"/>
    <property type="status" value="ALT_INIT"/>
    <property type="molecule type" value="Genomic_DNA"/>
</dbReference>
<dbReference type="RefSeq" id="NP_834855.1">
    <property type="nucleotide sequence ID" value="NC_004722.1"/>
</dbReference>
<dbReference type="RefSeq" id="WP_001990088.1">
    <property type="nucleotide sequence ID" value="NZ_CP138336.1"/>
</dbReference>
<dbReference type="SMR" id="P62171"/>
<dbReference type="STRING" id="226900.BC_5191"/>
<dbReference type="GeneID" id="93005930"/>
<dbReference type="KEGG" id="bce:BC5191"/>
<dbReference type="PATRIC" id="fig|226900.8.peg.5352"/>
<dbReference type="HOGENOM" id="CLU_117621_6_1_9"/>
<dbReference type="OrthoDB" id="9805039at2"/>
<dbReference type="Proteomes" id="UP000001417">
    <property type="component" value="Chromosome"/>
</dbReference>
<dbReference type="GO" id="GO:0005737">
    <property type="term" value="C:cytoplasm"/>
    <property type="evidence" value="ECO:0007669"/>
    <property type="project" value="UniProtKB-SubCell"/>
</dbReference>
<dbReference type="GO" id="GO:0003677">
    <property type="term" value="F:DNA binding"/>
    <property type="evidence" value="ECO:0007669"/>
    <property type="project" value="UniProtKB-KW"/>
</dbReference>
<dbReference type="GO" id="GO:0003676">
    <property type="term" value="F:nucleic acid binding"/>
    <property type="evidence" value="ECO:0000318"/>
    <property type="project" value="GO_Central"/>
</dbReference>
<dbReference type="GO" id="GO:0010468">
    <property type="term" value="P:regulation of gene expression"/>
    <property type="evidence" value="ECO:0000318"/>
    <property type="project" value="GO_Central"/>
</dbReference>
<dbReference type="CDD" id="cd04458">
    <property type="entry name" value="CSP_CDS"/>
    <property type="match status" value="1"/>
</dbReference>
<dbReference type="FunFam" id="2.40.50.140:FF:000006">
    <property type="entry name" value="Cold shock protein CspC"/>
    <property type="match status" value="1"/>
</dbReference>
<dbReference type="Gene3D" id="6.20.370.130">
    <property type="match status" value="1"/>
</dbReference>
<dbReference type="Gene3D" id="2.40.50.140">
    <property type="entry name" value="Nucleic acid-binding proteins"/>
    <property type="match status" value="1"/>
</dbReference>
<dbReference type="InterPro" id="IPR012156">
    <property type="entry name" value="Cold_shock_CspA"/>
</dbReference>
<dbReference type="InterPro" id="IPR050181">
    <property type="entry name" value="Cold_shock_domain"/>
</dbReference>
<dbReference type="InterPro" id="IPR011129">
    <property type="entry name" value="CSD"/>
</dbReference>
<dbReference type="InterPro" id="IPR019844">
    <property type="entry name" value="CSD_CS"/>
</dbReference>
<dbReference type="InterPro" id="IPR002059">
    <property type="entry name" value="CSP_DNA-bd"/>
</dbReference>
<dbReference type="InterPro" id="IPR012340">
    <property type="entry name" value="NA-bd_OB-fold"/>
</dbReference>
<dbReference type="PANTHER" id="PTHR11544">
    <property type="entry name" value="COLD SHOCK DOMAIN CONTAINING PROTEINS"/>
    <property type="match status" value="1"/>
</dbReference>
<dbReference type="Pfam" id="PF00313">
    <property type="entry name" value="CSD"/>
    <property type="match status" value="1"/>
</dbReference>
<dbReference type="PIRSF" id="PIRSF002599">
    <property type="entry name" value="Cold_shock_A"/>
    <property type="match status" value="1"/>
</dbReference>
<dbReference type="PRINTS" id="PR00050">
    <property type="entry name" value="COLDSHOCK"/>
</dbReference>
<dbReference type="SMART" id="SM00357">
    <property type="entry name" value="CSP"/>
    <property type="match status" value="1"/>
</dbReference>
<dbReference type="SUPFAM" id="SSF50249">
    <property type="entry name" value="Nucleic acid-binding proteins"/>
    <property type="match status" value="1"/>
</dbReference>
<dbReference type="PROSITE" id="PS00352">
    <property type="entry name" value="CSD_1"/>
    <property type="match status" value="1"/>
</dbReference>
<dbReference type="PROSITE" id="PS51857">
    <property type="entry name" value="CSD_2"/>
    <property type="match status" value="1"/>
</dbReference>
<organism>
    <name type="scientific">Bacillus cereus (strain ATCC 14579 / DSM 31 / CCUG 7414 / JCM 2152 / NBRC 15305 / NCIMB 9373 / NCTC 2599 / NRRL B-3711)</name>
    <dbReference type="NCBI Taxonomy" id="226900"/>
    <lineage>
        <taxon>Bacteria</taxon>
        <taxon>Bacillati</taxon>
        <taxon>Bacillota</taxon>
        <taxon>Bacilli</taxon>
        <taxon>Bacillales</taxon>
        <taxon>Bacillaceae</taxon>
        <taxon>Bacillus</taxon>
        <taxon>Bacillus cereus group</taxon>
    </lineage>
</organism>